<organism>
    <name type="scientific">Xylella fastidiosa (strain M12)</name>
    <dbReference type="NCBI Taxonomy" id="405440"/>
    <lineage>
        <taxon>Bacteria</taxon>
        <taxon>Pseudomonadati</taxon>
        <taxon>Pseudomonadota</taxon>
        <taxon>Gammaproteobacteria</taxon>
        <taxon>Lysobacterales</taxon>
        <taxon>Lysobacteraceae</taxon>
        <taxon>Xylella</taxon>
    </lineage>
</organism>
<evidence type="ECO:0000255" key="1">
    <source>
        <dbReference type="HAMAP-Rule" id="MF_01350"/>
    </source>
</evidence>
<proteinExistence type="inferred from homology"/>
<keyword id="KW-0997">Cell inner membrane</keyword>
<keyword id="KW-1003">Cell membrane</keyword>
<keyword id="KW-0472">Membrane</keyword>
<keyword id="KW-0520">NAD</keyword>
<keyword id="KW-0874">Quinone</keyword>
<keyword id="KW-1278">Translocase</keyword>
<keyword id="KW-0812">Transmembrane</keyword>
<keyword id="KW-1133">Transmembrane helix</keyword>
<keyword id="KW-0830">Ubiquinone</keyword>
<accession>B0U1X2</accession>
<reference key="1">
    <citation type="journal article" date="2010" name="J. Bacteriol.">
        <title>Whole genome sequences of two Xylella fastidiosa strains (M12 and M23) causing almond leaf scorch disease in California.</title>
        <authorList>
            <person name="Chen J."/>
            <person name="Xie G."/>
            <person name="Han S."/>
            <person name="Chertkov O."/>
            <person name="Sims D."/>
            <person name="Civerolo E.L."/>
        </authorList>
    </citation>
    <scope>NUCLEOTIDE SEQUENCE [LARGE SCALE GENOMIC DNA]</scope>
    <source>
        <strain>M12</strain>
    </source>
</reference>
<name>NUOH_XYLFM</name>
<gene>
    <name evidence="1" type="primary">nuoH</name>
    <name type="ordered locus">Xfasm12_0276</name>
</gene>
<comment type="function">
    <text evidence="1">NDH-1 shuttles electrons from NADH, via FMN and iron-sulfur (Fe-S) centers, to quinones in the respiratory chain. The immediate electron acceptor for the enzyme in this species is believed to be ubiquinone. Couples the redox reaction to proton translocation (for every two electrons transferred, four hydrogen ions are translocated across the cytoplasmic membrane), and thus conserves the redox energy in a proton gradient. This subunit may bind ubiquinone.</text>
</comment>
<comment type="catalytic activity">
    <reaction evidence="1">
        <text>a quinone + NADH + 5 H(+)(in) = a quinol + NAD(+) + 4 H(+)(out)</text>
        <dbReference type="Rhea" id="RHEA:57888"/>
        <dbReference type="ChEBI" id="CHEBI:15378"/>
        <dbReference type="ChEBI" id="CHEBI:24646"/>
        <dbReference type="ChEBI" id="CHEBI:57540"/>
        <dbReference type="ChEBI" id="CHEBI:57945"/>
        <dbReference type="ChEBI" id="CHEBI:132124"/>
    </reaction>
</comment>
<comment type="subunit">
    <text evidence="1">NDH-1 is composed of 14 different subunits. Subunits NuoA, H, J, K, L, M, N constitute the membrane sector of the complex.</text>
</comment>
<comment type="subcellular location">
    <subcellularLocation>
        <location evidence="1">Cell inner membrane</location>
        <topology evidence="1">Multi-pass membrane protein</topology>
    </subcellularLocation>
</comment>
<comment type="similarity">
    <text evidence="1">Belongs to the complex I subunit 1 family.</text>
</comment>
<protein>
    <recommendedName>
        <fullName evidence="1">NADH-quinone oxidoreductase subunit H</fullName>
        <ecNumber evidence="1">7.1.1.-</ecNumber>
    </recommendedName>
    <alternativeName>
        <fullName evidence="1">NADH dehydrogenase I subunit H</fullName>
    </alternativeName>
    <alternativeName>
        <fullName evidence="1">NDH-1 subunit H</fullName>
    </alternativeName>
</protein>
<dbReference type="EC" id="7.1.1.-" evidence="1"/>
<dbReference type="EMBL" id="CP000941">
    <property type="protein sequence ID" value="ACA11299.1"/>
    <property type="molecule type" value="Genomic_DNA"/>
</dbReference>
<dbReference type="RefSeq" id="WP_004085296.1">
    <property type="nucleotide sequence ID" value="NC_010513.1"/>
</dbReference>
<dbReference type="SMR" id="B0U1X2"/>
<dbReference type="KEGG" id="xfm:Xfasm12_0276"/>
<dbReference type="HOGENOM" id="CLU_015134_0_1_6"/>
<dbReference type="GO" id="GO:0005886">
    <property type="term" value="C:plasma membrane"/>
    <property type="evidence" value="ECO:0007669"/>
    <property type="project" value="UniProtKB-SubCell"/>
</dbReference>
<dbReference type="GO" id="GO:0003954">
    <property type="term" value="F:NADH dehydrogenase activity"/>
    <property type="evidence" value="ECO:0007669"/>
    <property type="project" value="TreeGrafter"/>
</dbReference>
<dbReference type="GO" id="GO:0016655">
    <property type="term" value="F:oxidoreductase activity, acting on NAD(P)H, quinone or similar compound as acceptor"/>
    <property type="evidence" value="ECO:0007669"/>
    <property type="project" value="UniProtKB-UniRule"/>
</dbReference>
<dbReference type="GO" id="GO:0048038">
    <property type="term" value="F:quinone binding"/>
    <property type="evidence" value="ECO:0007669"/>
    <property type="project" value="UniProtKB-KW"/>
</dbReference>
<dbReference type="GO" id="GO:0009060">
    <property type="term" value="P:aerobic respiration"/>
    <property type="evidence" value="ECO:0007669"/>
    <property type="project" value="TreeGrafter"/>
</dbReference>
<dbReference type="HAMAP" id="MF_01350">
    <property type="entry name" value="NDH1_NuoH"/>
    <property type="match status" value="1"/>
</dbReference>
<dbReference type="InterPro" id="IPR001694">
    <property type="entry name" value="NADH_UbQ_OxRdtase_su1/FPO"/>
</dbReference>
<dbReference type="InterPro" id="IPR018086">
    <property type="entry name" value="NADH_UbQ_OxRdtase_su1_CS"/>
</dbReference>
<dbReference type="NCBIfam" id="NF004741">
    <property type="entry name" value="PRK06076.1-2"/>
    <property type="match status" value="1"/>
</dbReference>
<dbReference type="NCBIfam" id="NF004742">
    <property type="entry name" value="PRK06076.1-3"/>
    <property type="match status" value="1"/>
</dbReference>
<dbReference type="PANTHER" id="PTHR11432">
    <property type="entry name" value="NADH DEHYDROGENASE SUBUNIT 1"/>
    <property type="match status" value="1"/>
</dbReference>
<dbReference type="PANTHER" id="PTHR11432:SF3">
    <property type="entry name" value="NADH-UBIQUINONE OXIDOREDUCTASE CHAIN 1"/>
    <property type="match status" value="1"/>
</dbReference>
<dbReference type="Pfam" id="PF00146">
    <property type="entry name" value="NADHdh"/>
    <property type="match status" value="1"/>
</dbReference>
<dbReference type="PROSITE" id="PS00668">
    <property type="entry name" value="COMPLEX1_ND1_2"/>
    <property type="match status" value="1"/>
</dbReference>
<sequence>MNTWFLNVVDPLHQWFLGFGDIGVVLWTVLKILMIAIPLIVSVAFYVVWERKLIGWMHVRHGPMYVGMGLFQAFADVFKLLFKEVLYPSKAHKVIFVIAPLLTLAPSFAAWAVVPFDTKLVLSNANVGLLYLLAMTSLGVYGIILAGWASNSKYAFLGAMRSAAQVVSYEIAMGFALVGVMIAAGSLNLSQIVMAQAGSSGFFDWFLIPLFPLFIVYWVSGVAETNRSPFDVVEGESEIVAGHMVEYSGSVFALFFLAEYANMILVSFLISIFFLGGWLSPIQGWVSGQVSPLIDWVWNGGWPWLLLKVLFFASAYIWFRASFPRYRYDQIMRLGWKVFIPLTIVWIAVTALMVFSGVIQKGV</sequence>
<feature type="chain" id="PRO_1000143625" description="NADH-quinone oxidoreductase subunit H">
    <location>
        <begin position="1"/>
        <end position="363"/>
    </location>
</feature>
<feature type="transmembrane region" description="Helical" evidence="1">
    <location>
        <begin position="29"/>
        <end position="49"/>
    </location>
</feature>
<feature type="transmembrane region" description="Helical" evidence="1">
    <location>
        <begin position="62"/>
        <end position="82"/>
    </location>
</feature>
<feature type="transmembrane region" description="Helical" evidence="1">
    <location>
        <begin position="94"/>
        <end position="114"/>
    </location>
</feature>
<feature type="transmembrane region" description="Helical" evidence="1">
    <location>
        <begin position="127"/>
        <end position="147"/>
    </location>
</feature>
<feature type="transmembrane region" description="Helical" evidence="1">
    <location>
        <begin position="166"/>
        <end position="186"/>
    </location>
</feature>
<feature type="transmembrane region" description="Helical" evidence="1">
    <location>
        <begin position="202"/>
        <end position="222"/>
    </location>
</feature>
<feature type="transmembrane region" description="Helical" evidence="1">
    <location>
        <begin position="239"/>
        <end position="257"/>
    </location>
</feature>
<feature type="transmembrane region" description="Helical" evidence="1">
    <location>
        <begin position="264"/>
        <end position="286"/>
    </location>
</feature>
<feature type="transmembrane region" description="Helical" evidence="1">
    <location>
        <begin position="293"/>
        <end position="313"/>
    </location>
</feature>
<feature type="transmembrane region" description="Helical" evidence="1">
    <location>
        <begin position="339"/>
        <end position="359"/>
    </location>
</feature>